<proteinExistence type="evidence at transcript level"/>
<keyword id="KW-1185">Reference proteome</keyword>
<keyword id="KW-0677">Repeat</keyword>
<reference key="1">
    <citation type="journal article" date="1999" name="Nature">
        <title>Sequence and analysis of chromosome 2 of the plant Arabidopsis thaliana.</title>
        <authorList>
            <person name="Lin X."/>
            <person name="Kaul S."/>
            <person name="Rounsley S.D."/>
            <person name="Shea T.P."/>
            <person name="Benito M.-I."/>
            <person name="Town C.D."/>
            <person name="Fujii C.Y."/>
            <person name="Mason T.M."/>
            <person name="Bowman C.L."/>
            <person name="Barnstead M.E."/>
            <person name="Feldblyum T.V."/>
            <person name="Buell C.R."/>
            <person name="Ketchum K.A."/>
            <person name="Lee J.J."/>
            <person name="Ronning C.M."/>
            <person name="Koo H.L."/>
            <person name="Moffat K.S."/>
            <person name="Cronin L.A."/>
            <person name="Shen M."/>
            <person name="Pai G."/>
            <person name="Van Aken S."/>
            <person name="Umayam L."/>
            <person name="Tallon L.J."/>
            <person name="Gill J.E."/>
            <person name="Adams M.D."/>
            <person name="Carrera A.J."/>
            <person name="Creasy T.H."/>
            <person name="Goodman H.M."/>
            <person name="Somerville C.R."/>
            <person name="Copenhaver G.P."/>
            <person name="Preuss D."/>
            <person name="Nierman W.C."/>
            <person name="White O."/>
            <person name="Eisen J.A."/>
            <person name="Salzberg S.L."/>
            <person name="Fraser C.M."/>
            <person name="Venter J.C."/>
        </authorList>
    </citation>
    <scope>NUCLEOTIDE SEQUENCE [LARGE SCALE GENOMIC DNA]</scope>
    <source>
        <strain>cv. Columbia</strain>
    </source>
</reference>
<reference key="2">
    <citation type="journal article" date="2017" name="Plant J.">
        <title>Araport11: a complete reannotation of the Arabidopsis thaliana reference genome.</title>
        <authorList>
            <person name="Cheng C.Y."/>
            <person name="Krishnakumar V."/>
            <person name="Chan A.P."/>
            <person name="Thibaud-Nissen F."/>
            <person name="Schobel S."/>
            <person name="Town C.D."/>
        </authorList>
    </citation>
    <scope>GENOME REANNOTATION</scope>
    <source>
        <strain>cv. Columbia</strain>
    </source>
</reference>
<reference key="3">
    <citation type="submission" date="2006-07" db="EMBL/GenBank/DDBJ databases">
        <title>Large-scale analysis of RIKEN Arabidopsis full-length (RAFL) cDNAs.</title>
        <authorList>
            <person name="Totoki Y."/>
            <person name="Seki M."/>
            <person name="Ishida J."/>
            <person name="Nakajima M."/>
            <person name="Enju A."/>
            <person name="Kamiya A."/>
            <person name="Narusaka M."/>
            <person name="Shin-i T."/>
            <person name="Nakagawa M."/>
            <person name="Sakamoto N."/>
            <person name="Oishi K."/>
            <person name="Kohara Y."/>
            <person name="Kobayashi M."/>
            <person name="Toyoda A."/>
            <person name="Sakaki Y."/>
            <person name="Sakurai T."/>
            <person name="Iida K."/>
            <person name="Akiyama K."/>
            <person name="Satou M."/>
            <person name="Toyoda T."/>
            <person name="Konagaya A."/>
            <person name="Carninci P."/>
            <person name="Kawai J."/>
            <person name="Hayashizaki Y."/>
            <person name="Shinozaki K."/>
        </authorList>
    </citation>
    <scope>NUCLEOTIDE SEQUENCE [LARGE SCALE MRNA]</scope>
    <source>
        <strain>cv. Columbia</strain>
    </source>
</reference>
<reference key="4">
    <citation type="journal article" date="2004" name="Plant Cell">
        <title>Genome-wide analysis of Arabidopsis pentatricopeptide repeat proteins reveals their essential role in organelle biogenesis.</title>
        <authorList>
            <person name="Lurin C."/>
            <person name="Andres C."/>
            <person name="Aubourg S."/>
            <person name="Bellaoui M."/>
            <person name="Bitton F."/>
            <person name="Bruyere C."/>
            <person name="Caboche M."/>
            <person name="Debast C."/>
            <person name="Gualberto J."/>
            <person name="Hoffmann B."/>
            <person name="Lecharny A."/>
            <person name="Le Ret M."/>
            <person name="Martin-Magniette M.-L."/>
            <person name="Mireau H."/>
            <person name="Peeters N."/>
            <person name="Renou J.-P."/>
            <person name="Szurek B."/>
            <person name="Taconnat L."/>
            <person name="Small I."/>
        </authorList>
    </citation>
    <scope>GENE FAMILY</scope>
</reference>
<organism>
    <name type="scientific">Arabidopsis thaliana</name>
    <name type="common">Mouse-ear cress</name>
    <dbReference type="NCBI Taxonomy" id="3702"/>
    <lineage>
        <taxon>Eukaryota</taxon>
        <taxon>Viridiplantae</taxon>
        <taxon>Streptophyta</taxon>
        <taxon>Embryophyta</taxon>
        <taxon>Tracheophyta</taxon>
        <taxon>Spermatophyta</taxon>
        <taxon>Magnoliopsida</taxon>
        <taxon>eudicotyledons</taxon>
        <taxon>Gunneridae</taxon>
        <taxon>Pentapetalae</taxon>
        <taxon>rosids</taxon>
        <taxon>malvids</taxon>
        <taxon>Brassicales</taxon>
        <taxon>Brassicaceae</taxon>
        <taxon>Camelineae</taxon>
        <taxon>Arabidopsis</taxon>
    </lineage>
</organism>
<accession>Q9ZUE9</accession>
<protein>
    <recommendedName>
        <fullName>Pentatricopeptide repeat-containing protein At2g06000</fullName>
    </recommendedName>
</protein>
<feature type="chain" id="PRO_0000356009" description="Pentatricopeptide repeat-containing protein At2g06000">
    <location>
        <begin position="1"/>
        <end position="536"/>
    </location>
</feature>
<feature type="repeat" description="PPR 1">
    <location>
        <begin position="102"/>
        <end position="136"/>
    </location>
</feature>
<feature type="repeat" description="PPR 2">
    <location>
        <begin position="137"/>
        <end position="167"/>
    </location>
</feature>
<feature type="repeat" description="PPR 3">
    <location>
        <begin position="170"/>
        <end position="200"/>
    </location>
</feature>
<feature type="repeat" description="PPR 4">
    <location>
        <begin position="205"/>
        <end position="239"/>
    </location>
</feature>
<feature type="repeat" description="PPR 5">
    <location>
        <begin position="240"/>
        <end position="274"/>
    </location>
</feature>
<feature type="repeat" description="PPR 6">
    <location>
        <begin position="276"/>
        <end position="310"/>
    </location>
</feature>
<feature type="repeat" description="PPR 7">
    <location>
        <begin position="311"/>
        <end position="345"/>
    </location>
</feature>
<feature type="repeat" description="PPR 8">
    <location>
        <begin position="346"/>
        <end position="380"/>
    </location>
</feature>
<feature type="repeat" description="PPR 9">
    <location>
        <begin position="381"/>
        <end position="415"/>
    </location>
</feature>
<feature type="repeat" description="PPR 10">
    <location>
        <begin position="416"/>
        <end position="450"/>
    </location>
</feature>
<feature type="repeat" description="PPR 11">
    <location>
        <begin position="451"/>
        <end position="485"/>
    </location>
</feature>
<feature type="repeat" description="PPR 12">
    <location>
        <begin position="486"/>
        <end position="523"/>
    </location>
</feature>
<gene>
    <name type="ordered locus">At2g06000</name>
    <name type="ORF">T6P5.20</name>
</gene>
<sequence length="536" mass="59773">MIRTTFATAIAHFHTHSHGGAQARPLQNNTREVIHCPEAWLVKIVSTLFVYRVPDSDLCFCYLSKNLNPFISFEVVKKLDNNPHIGFRFWEFSRFKLNIRHSFWTYNLLTRSLCKAGLHDLAGQMFECMKSDGVSPNNRLLGFLVSSFAEKGKLHFATALLLQSFEVEGCCMVVNSLLNTLVKLDRVEDAMKLFDEHLRFQSCNDTKTFNILIRGLCGVGKAEKALELLGVMSGFGCEPDIVTYNTLIQGFCKSNELNKASEMFKDVKSGSVCSPDVVTYTSMISGYCKAGKMREASSLLDDMLRLGIYPTNVTFNVLVDGYAKAGEMLTAEEIRGKMISFGCFPDVVTFTSLIDGYCRVGQVSQGFRLWEEMNARGMFPNAFTYSILINALCNENRLLKARELLGQLASKDIIPQPFMYNPVIDGFCKAGKVNEANVIVEEMEKKKCKPDKITFTILIIGHCMKGRMFEAVSIFHKMVAIGCSPDKITVSSLLSCLLKAGMAKEAYHLNQIARKGQSNNVVPLETKTANATLAAC</sequence>
<dbReference type="EMBL" id="AC005970">
    <property type="protein sequence ID" value="AAC95177.1"/>
    <property type="molecule type" value="Genomic_DNA"/>
</dbReference>
<dbReference type="EMBL" id="CP002685">
    <property type="protein sequence ID" value="AEC05990.1"/>
    <property type="molecule type" value="Genomic_DNA"/>
</dbReference>
<dbReference type="EMBL" id="CP002685">
    <property type="protein sequence ID" value="AEC05991.1"/>
    <property type="molecule type" value="Genomic_DNA"/>
</dbReference>
<dbReference type="EMBL" id="AK228150">
    <property type="protein sequence ID" value="BAF00106.1"/>
    <property type="molecule type" value="mRNA"/>
</dbReference>
<dbReference type="PIR" id="A84474">
    <property type="entry name" value="A84474"/>
</dbReference>
<dbReference type="RefSeq" id="NP_178657.1">
    <property type="nucleotide sequence ID" value="NM_126613.4"/>
</dbReference>
<dbReference type="RefSeq" id="NP_973429.1">
    <property type="nucleotide sequence ID" value="NM_201700.3"/>
</dbReference>
<dbReference type="SMR" id="Q9ZUE9"/>
<dbReference type="FunCoup" id="Q9ZUE9">
    <property type="interactions" value="605"/>
</dbReference>
<dbReference type="STRING" id="3702.Q9ZUE9"/>
<dbReference type="PaxDb" id="3702-AT2G06000.2"/>
<dbReference type="ProteomicsDB" id="249416"/>
<dbReference type="EnsemblPlants" id="AT2G06000.1">
    <property type="protein sequence ID" value="AT2G06000.1"/>
    <property type="gene ID" value="AT2G06000"/>
</dbReference>
<dbReference type="EnsemblPlants" id="AT2G06000.2">
    <property type="protein sequence ID" value="AT2G06000.2"/>
    <property type="gene ID" value="AT2G06000"/>
</dbReference>
<dbReference type="GeneID" id="815153"/>
<dbReference type="Gramene" id="AT2G06000.1">
    <property type="protein sequence ID" value="AT2G06000.1"/>
    <property type="gene ID" value="AT2G06000"/>
</dbReference>
<dbReference type="Gramene" id="AT2G06000.2">
    <property type="protein sequence ID" value="AT2G06000.2"/>
    <property type="gene ID" value="AT2G06000"/>
</dbReference>
<dbReference type="KEGG" id="ath:AT2G06000"/>
<dbReference type="Araport" id="AT2G06000"/>
<dbReference type="TAIR" id="AT2G06000"/>
<dbReference type="eggNOG" id="KOG4197">
    <property type="taxonomic scope" value="Eukaryota"/>
</dbReference>
<dbReference type="HOGENOM" id="CLU_002706_49_0_1"/>
<dbReference type="InParanoid" id="Q9ZUE9"/>
<dbReference type="OMA" id="TVNILMR"/>
<dbReference type="PhylomeDB" id="Q9ZUE9"/>
<dbReference type="PRO" id="PR:Q9ZUE9"/>
<dbReference type="Proteomes" id="UP000006548">
    <property type="component" value="Chromosome 2"/>
</dbReference>
<dbReference type="ExpressionAtlas" id="Q9ZUE9">
    <property type="expression patterns" value="baseline and differential"/>
</dbReference>
<dbReference type="Gene3D" id="1.25.40.10">
    <property type="entry name" value="Tetratricopeptide repeat domain"/>
    <property type="match status" value="4"/>
</dbReference>
<dbReference type="InterPro" id="IPR051114">
    <property type="entry name" value="Mito_RNA_Proc_CCM1"/>
</dbReference>
<dbReference type="InterPro" id="IPR002885">
    <property type="entry name" value="Pentatricopeptide_rpt"/>
</dbReference>
<dbReference type="InterPro" id="IPR011990">
    <property type="entry name" value="TPR-like_helical_dom_sf"/>
</dbReference>
<dbReference type="NCBIfam" id="TIGR00756">
    <property type="entry name" value="PPR"/>
    <property type="match status" value="9"/>
</dbReference>
<dbReference type="PANTHER" id="PTHR47934:SF2">
    <property type="entry name" value="OS07G0671200 PROTEIN"/>
    <property type="match status" value="1"/>
</dbReference>
<dbReference type="PANTHER" id="PTHR47934">
    <property type="entry name" value="PENTATRICOPEPTIDE REPEAT-CONTAINING PROTEIN PET309, MITOCHONDRIAL"/>
    <property type="match status" value="1"/>
</dbReference>
<dbReference type="Pfam" id="PF01535">
    <property type="entry name" value="PPR"/>
    <property type="match status" value="2"/>
</dbReference>
<dbReference type="Pfam" id="PF13041">
    <property type="entry name" value="PPR_2"/>
    <property type="match status" value="4"/>
</dbReference>
<dbReference type="PROSITE" id="PS51375">
    <property type="entry name" value="PPR"/>
    <property type="match status" value="11"/>
</dbReference>
<name>PP149_ARATH</name>
<comment type="similarity">
    <text evidence="1">Belongs to the PPR family. P subfamily.</text>
</comment>
<comment type="online information" name="Pentatricopeptide repeat proteins">
    <link uri="https://ppr.plantenergy.uwa.edu.au"/>
</comment>
<evidence type="ECO:0000305" key="1"/>